<dbReference type="EC" id="4.1.99.22" evidence="1"/>
<dbReference type="EMBL" id="CP001233">
    <property type="protein sequence ID" value="ACP05297.1"/>
    <property type="molecule type" value="Genomic_DNA"/>
</dbReference>
<dbReference type="SMR" id="C3LTS1"/>
<dbReference type="KEGG" id="vcm:VCM66_0979"/>
<dbReference type="HOGENOM" id="CLU_009273_0_1_6"/>
<dbReference type="UniPathway" id="UPA00344"/>
<dbReference type="Proteomes" id="UP000001217">
    <property type="component" value="Chromosome I"/>
</dbReference>
<dbReference type="GO" id="GO:0051539">
    <property type="term" value="F:4 iron, 4 sulfur cluster binding"/>
    <property type="evidence" value="ECO:0007669"/>
    <property type="project" value="UniProtKB-UniRule"/>
</dbReference>
<dbReference type="GO" id="GO:0061799">
    <property type="term" value="F:cyclic pyranopterin monophosphate synthase activity"/>
    <property type="evidence" value="ECO:0007669"/>
    <property type="project" value="TreeGrafter"/>
</dbReference>
<dbReference type="GO" id="GO:0061798">
    <property type="term" value="F:GTP 3',8'-cyclase activity"/>
    <property type="evidence" value="ECO:0007669"/>
    <property type="project" value="UniProtKB-UniRule"/>
</dbReference>
<dbReference type="GO" id="GO:0005525">
    <property type="term" value="F:GTP binding"/>
    <property type="evidence" value="ECO:0007669"/>
    <property type="project" value="UniProtKB-UniRule"/>
</dbReference>
<dbReference type="GO" id="GO:0046872">
    <property type="term" value="F:metal ion binding"/>
    <property type="evidence" value="ECO:0007669"/>
    <property type="project" value="UniProtKB-KW"/>
</dbReference>
<dbReference type="GO" id="GO:1904047">
    <property type="term" value="F:S-adenosyl-L-methionine binding"/>
    <property type="evidence" value="ECO:0007669"/>
    <property type="project" value="UniProtKB-UniRule"/>
</dbReference>
<dbReference type="GO" id="GO:0006777">
    <property type="term" value="P:Mo-molybdopterin cofactor biosynthetic process"/>
    <property type="evidence" value="ECO:0007669"/>
    <property type="project" value="UniProtKB-UniRule"/>
</dbReference>
<dbReference type="CDD" id="cd01335">
    <property type="entry name" value="Radical_SAM"/>
    <property type="match status" value="1"/>
</dbReference>
<dbReference type="CDD" id="cd21117">
    <property type="entry name" value="Twitch_MoaA"/>
    <property type="match status" value="1"/>
</dbReference>
<dbReference type="FunFam" id="3.20.20.70:FF:000057">
    <property type="entry name" value="GTP 3',8-cyclase"/>
    <property type="match status" value="1"/>
</dbReference>
<dbReference type="Gene3D" id="3.20.20.70">
    <property type="entry name" value="Aldolase class I"/>
    <property type="match status" value="1"/>
</dbReference>
<dbReference type="HAMAP" id="MF_01225_B">
    <property type="entry name" value="MoaA_B"/>
    <property type="match status" value="1"/>
</dbReference>
<dbReference type="InterPro" id="IPR013785">
    <property type="entry name" value="Aldolase_TIM"/>
</dbReference>
<dbReference type="InterPro" id="IPR006638">
    <property type="entry name" value="Elp3/MiaA/NifB-like_rSAM"/>
</dbReference>
<dbReference type="InterPro" id="IPR013483">
    <property type="entry name" value="MoaA"/>
</dbReference>
<dbReference type="InterPro" id="IPR010505">
    <property type="entry name" value="MoaA_twitch"/>
</dbReference>
<dbReference type="InterPro" id="IPR050105">
    <property type="entry name" value="MoCo_biosynth_MoaA/MoaC"/>
</dbReference>
<dbReference type="InterPro" id="IPR007197">
    <property type="entry name" value="rSAM"/>
</dbReference>
<dbReference type="NCBIfam" id="TIGR02666">
    <property type="entry name" value="moaA"/>
    <property type="match status" value="1"/>
</dbReference>
<dbReference type="PANTHER" id="PTHR22960:SF28">
    <property type="entry name" value="GTP 3',8-CYCLASE"/>
    <property type="match status" value="1"/>
</dbReference>
<dbReference type="PANTHER" id="PTHR22960">
    <property type="entry name" value="MOLYBDOPTERIN COFACTOR SYNTHESIS PROTEIN A"/>
    <property type="match status" value="1"/>
</dbReference>
<dbReference type="Pfam" id="PF13353">
    <property type="entry name" value="Fer4_12"/>
    <property type="match status" value="1"/>
</dbReference>
<dbReference type="Pfam" id="PF06463">
    <property type="entry name" value="Mob_synth_C"/>
    <property type="match status" value="1"/>
</dbReference>
<dbReference type="Pfam" id="PF04055">
    <property type="entry name" value="Radical_SAM"/>
    <property type="match status" value="1"/>
</dbReference>
<dbReference type="SFLD" id="SFLDG01383">
    <property type="entry name" value="cyclic_pyranopterin_phosphate"/>
    <property type="match status" value="1"/>
</dbReference>
<dbReference type="SFLD" id="SFLDS00029">
    <property type="entry name" value="Radical_SAM"/>
    <property type="match status" value="1"/>
</dbReference>
<dbReference type="SMART" id="SM00729">
    <property type="entry name" value="Elp3"/>
    <property type="match status" value="1"/>
</dbReference>
<dbReference type="SUPFAM" id="SSF102114">
    <property type="entry name" value="Radical SAM enzymes"/>
    <property type="match status" value="1"/>
</dbReference>
<dbReference type="PROSITE" id="PS51918">
    <property type="entry name" value="RADICAL_SAM"/>
    <property type="match status" value="1"/>
</dbReference>
<accession>C3LTS1</accession>
<comment type="function">
    <text evidence="1">Catalyzes the cyclization of GTP to (8S)-3',8-cyclo-7,8-dihydroguanosine 5'-triphosphate.</text>
</comment>
<comment type="catalytic activity">
    <reaction evidence="1">
        <text>GTP + AH2 + S-adenosyl-L-methionine = (8S)-3',8-cyclo-7,8-dihydroguanosine 5'-triphosphate + 5'-deoxyadenosine + L-methionine + A + H(+)</text>
        <dbReference type="Rhea" id="RHEA:49576"/>
        <dbReference type="ChEBI" id="CHEBI:13193"/>
        <dbReference type="ChEBI" id="CHEBI:15378"/>
        <dbReference type="ChEBI" id="CHEBI:17319"/>
        <dbReference type="ChEBI" id="CHEBI:17499"/>
        <dbReference type="ChEBI" id="CHEBI:37565"/>
        <dbReference type="ChEBI" id="CHEBI:57844"/>
        <dbReference type="ChEBI" id="CHEBI:59789"/>
        <dbReference type="ChEBI" id="CHEBI:131766"/>
        <dbReference type="EC" id="4.1.99.22"/>
    </reaction>
</comment>
<comment type="cofactor">
    <cofactor evidence="1">
        <name>[4Fe-4S] cluster</name>
        <dbReference type="ChEBI" id="CHEBI:49883"/>
    </cofactor>
    <text evidence="1">Binds 2 [4Fe-4S] clusters. Binds 1 [4Fe-4S] cluster coordinated with 3 cysteines and an exchangeable S-adenosyl-L-methionine and 1 [4Fe-4S] cluster coordinated with 3 cysteines and the GTP-derived substrate.</text>
</comment>
<comment type="pathway">
    <text evidence="1">Cofactor biosynthesis; molybdopterin biosynthesis.</text>
</comment>
<comment type="subunit">
    <text evidence="1">Monomer and homodimer.</text>
</comment>
<comment type="similarity">
    <text evidence="1">Belongs to the radical SAM superfamily. MoaA family.</text>
</comment>
<reference key="1">
    <citation type="journal article" date="2008" name="PLoS ONE">
        <title>A recalibrated molecular clock and independent origins for the cholera pandemic clones.</title>
        <authorList>
            <person name="Feng L."/>
            <person name="Reeves P.R."/>
            <person name="Lan R."/>
            <person name="Ren Y."/>
            <person name="Gao C."/>
            <person name="Zhou Z."/>
            <person name="Ren Y."/>
            <person name="Cheng J."/>
            <person name="Wang W."/>
            <person name="Wang J."/>
            <person name="Qian W."/>
            <person name="Li D."/>
            <person name="Wang L."/>
        </authorList>
    </citation>
    <scope>NUCLEOTIDE SEQUENCE [LARGE SCALE GENOMIC DNA]</scope>
    <source>
        <strain>M66-2</strain>
    </source>
</reference>
<proteinExistence type="inferred from homology"/>
<feature type="chain" id="PRO_1000164920" description="GTP 3',8-cyclase">
    <location>
        <begin position="1"/>
        <end position="334"/>
    </location>
</feature>
<feature type="domain" description="Radical SAM core" evidence="2">
    <location>
        <begin position="13"/>
        <end position="239"/>
    </location>
</feature>
<feature type="binding site" evidence="1">
    <location>
        <position position="22"/>
    </location>
    <ligand>
        <name>GTP</name>
        <dbReference type="ChEBI" id="CHEBI:37565"/>
    </ligand>
</feature>
<feature type="binding site" evidence="1">
    <location>
        <position position="29"/>
    </location>
    <ligand>
        <name>[4Fe-4S] cluster</name>
        <dbReference type="ChEBI" id="CHEBI:49883"/>
        <label>1</label>
        <note>4Fe-4S-S-AdoMet</note>
    </ligand>
</feature>
<feature type="binding site" evidence="1">
    <location>
        <position position="33"/>
    </location>
    <ligand>
        <name>[4Fe-4S] cluster</name>
        <dbReference type="ChEBI" id="CHEBI:49883"/>
        <label>1</label>
        <note>4Fe-4S-S-AdoMet</note>
    </ligand>
</feature>
<feature type="binding site" evidence="1">
    <location>
        <position position="35"/>
    </location>
    <ligand>
        <name>S-adenosyl-L-methionine</name>
        <dbReference type="ChEBI" id="CHEBI:59789"/>
    </ligand>
</feature>
<feature type="binding site" evidence="1">
    <location>
        <position position="36"/>
    </location>
    <ligand>
        <name>[4Fe-4S] cluster</name>
        <dbReference type="ChEBI" id="CHEBI:49883"/>
        <label>1</label>
        <note>4Fe-4S-S-AdoMet</note>
    </ligand>
</feature>
<feature type="binding site" evidence="1">
    <location>
        <position position="73"/>
    </location>
    <ligand>
        <name>GTP</name>
        <dbReference type="ChEBI" id="CHEBI:37565"/>
    </ligand>
</feature>
<feature type="binding site" evidence="1">
    <location>
        <position position="77"/>
    </location>
    <ligand>
        <name>S-adenosyl-L-methionine</name>
        <dbReference type="ChEBI" id="CHEBI:59789"/>
    </ligand>
</feature>
<feature type="binding site" evidence="1">
    <location>
        <position position="104"/>
    </location>
    <ligand>
        <name>GTP</name>
        <dbReference type="ChEBI" id="CHEBI:37565"/>
    </ligand>
</feature>
<feature type="binding site" evidence="1">
    <location>
        <position position="128"/>
    </location>
    <ligand>
        <name>S-adenosyl-L-methionine</name>
        <dbReference type="ChEBI" id="CHEBI:59789"/>
    </ligand>
</feature>
<feature type="binding site" evidence="1">
    <location>
        <position position="165"/>
    </location>
    <ligand>
        <name>GTP</name>
        <dbReference type="ChEBI" id="CHEBI:37565"/>
    </ligand>
</feature>
<feature type="binding site" evidence="1">
    <location>
        <position position="199"/>
    </location>
    <ligand>
        <name>S-adenosyl-L-methionine</name>
        <dbReference type="ChEBI" id="CHEBI:59789"/>
    </ligand>
</feature>
<feature type="binding site" evidence="1">
    <location>
        <position position="262"/>
    </location>
    <ligand>
        <name>[4Fe-4S] cluster</name>
        <dbReference type="ChEBI" id="CHEBI:49883"/>
        <label>2</label>
        <note>4Fe-4S-substrate</note>
    </ligand>
</feature>
<feature type="binding site" evidence="1">
    <location>
        <position position="265"/>
    </location>
    <ligand>
        <name>[4Fe-4S] cluster</name>
        <dbReference type="ChEBI" id="CHEBI:49883"/>
        <label>2</label>
        <note>4Fe-4S-substrate</note>
    </ligand>
</feature>
<feature type="binding site" evidence="1">
    <location>
        <begin position="267"/>
        <end position="269"/>
    </location>
    <ligand>
        <name>GTP</name>
        <dbReference type="ChEBI" id="CHEBI:37565"/>
    </ligand>
</feature>
<feature type="binding site" evidence="1">
    <location>
        <position position="279"/>
    </location>
    <ligand>
        <name>[4Fe-4S] cluster</name>
        <dbReference type="ChEBI" id="CHEBI:49883"/>
        <label>2</label>
        <note>4Fe-4S-substrate</note>
    </ligand>
</feature>
<keyword id="KW-0004">4Fe-4S</keyword>
<keyword id="KW-0342">GTP-binding</keyword>
<keyword id="KW-0408">Iron</keyword>
<keyword id="KW-0411">Iron-sulfur</keyword>
<keyword id="KW-0456">Lyase</keyword>
<keyword id="KW-0479">Metal-binding</keyword>
<keyword id="KW-0501">Molybdenum cofactor biosynthesis</keyword>
<keyword id="KW-0547">Nucleotide-binding</keyword>
<keyword id="KW-0949">S-adenosyl-L-methionine</keyword>
<name>MOAA_VIBCM</name>
<protein>
    <recommendedName>
        <fullName evidence="1">GTP 3',8-cyclase</fullName>
        <ecNumber evidence="1">4.1.99.22</ecNumber>
    </recommendedName>
    <alternativeName>
        <fullName evidence="1">Molybdenum cofactor biosynthesis protein A</fullName>
    </alternativeName>
</protein>
<evidence type="ECO:0000255" key="1">
    <source>
        <dbReference type="HAMAP-Rule" id="MF_01225"/>
    </source>
</evidence>
<evidence type="ECO:0000255" key="2">
    <source>
        <dbReference type="PROSITE-ProRule" id="PRU01266"/>
    </source>
</evidence>
<organism>
    <name type="scientific">Vibrio cholerae serotype O1 (strain M66-2)</name>
    <dbReference type="NCBI Taxonomy" id="579112"/>
    <lineage>
        <taxon>Bacteria</taxon>
        <taxon>Pseudomonadati</taxon>
        <taxon>Pseudomonadota</taxon>
        <taxon>Gammaproteobacteria</taxon>
        <taxon>Vibrionales</taxon>
        <taxon>Vibrionaceae</taxon>
        <taxon>Vibrio</taxon>
    </lineage>
</organism>
<sequence length="334" mass="37857">MERCSVAQQFEDRFQRKFYYLRLSITDVCNFKCTYCLPDGYKPSAGRPASFLTVNEIRRVVSAFAHCGTSKVRITGGEPSLRKDFGEIIHTIAQTPGIQKVATTTNGYRLAKHIGEWREAGLTQLNVSVDSLDPRMFAQITGENRFQQVMSGIDRAFEVGFEQVKVNVVLMKNLNHLELPQFMAWIKTRPIQLRFIELMQTGEMDALFARHHVSGISIRDYLFGNGWLLKARADNDGPAQVFIHPDFQGEIGLIMPYEKDFCRSCNRLRVSALGKLHLCLFGEQGIELRDLLQDDHQENALIERIQTQLQNKAETHFLHDGNSGVTPHLASIGG</sequence>
<gene>
    <name evidence="1" type="primary">moaA</name>
    <name type="ordered locus">VCM66_0979</name>
</gene>